<sequence length="764" mass="79042">MGSGLVARIRGSYGTKLTLALVVVVVLSVGVGTFVYQQTTTQLETDVRADLTGSADARADHLDAWLSNARGQTQLASRHPVLASGNDTAITRYLEGLAASDERPDGVVAAHVYNTSTTTIEASSADAFTGVNPREQGAPFATDPPSFATTSDVVVAAPFTVPAADFPVLSVLSPIPGTTDKALIYMVNVNTLTDDFGQNVAGSTTTVVSADGTYVSHPDQDRVLTGHDGPSRLLNQSRTQPAYIDANGTVTAAAPVDGAPWSVLVRAPHDRAFALGDFVASSLVGLVLITIVSLSLIGVTVGSTTVTALRQFSRRADEMAAGDLDTDIDTSRNDEFGTLAESFRSMRDSLSESLTDAERATARAEDAREDAEQQRADAEAAREDAEAARKDAQETARALESAAADYEEALTAVADGDLTRRVDASRDHDAMARIGHALNDMLDDIETSVAAATAFSDHVSDAAQRVEADAGDAIDAGTDVSTAVDEISDGATEQTDRLHEVAGEVDDLSASAEEVAETVASLADTAGQAASAVDDGRQATEDAVETMDDVADDAEAAADAMDALDSEMADIGEIVDVIADIADQTNMLALNASIEAARTGADGDGFAVVADEVKTLAEESRDAAEDIESRLLALQGQVSDVADEMRATSDTVSDGRATVGDAATALDDVVSFVADTDTAAGEIRAATDRQAHAASRVASAVDEVAGISQETAAQATAVADSAATQTDTLSSVDDAAADLADRAAALDDLLAEFDAHDDTEPEDY</sequence>
<dbReference type="EMBL" id="AM774415">
    <property type="protein sequence ID" value="CAP14280.1"/>
    <property type="molecule type" value="Genomic_DNA"/>
</dbReference>
<dbReference type="RefSeq" id="WP_010903287.1">
    <property type="nucleotide sequence ID" value="NC_010364.1"/>
</dbReference>
<dbReference type="SMR" id="B0R6B1"/>
<dbReference type="EnsemblBacteria" id="CAP14280">
    <property type="protein sequence ID" value="CAP14280"/>
    <property type="gene ID" value="OE_3481R"/>
</dbReference>
<dbReference type="GeneID" id="68694407"/>
<dbReference type="KEGG" id="hsl:OE_3481R"/>
<dbReference type="HOGENOM" id="CLU_000445_107_19_2"/>
<dbReference type="PhylomeDB" id="B0R6B1"/>
<dbReference type="Proteomes" id="UP000001321">
    <property type="component" value="Chromosome"/>
</dbReference>
<dbReference type="GO" id="GO:0005886">
    <property type="term" value="C:plasma membrane"/>
    <property type="evidence" value="ECO:0007669"/>
    <property type="project" value="UniProtKB-SubCell"/>
</dbReference>
<dbReference type="GO" id="GO:0009881">
    <property type="term" value="F:photoreceptor activity"/>
    <property type="evidence" value="ECO:0007669"/>
    <property type="project" value="UniProtKB-KW"/>
</dbReference>
<dbReference type="GO" id="GO:0006935">
    <property type="term" value="P:chemotaxis"/>
    <property type="evidence" value="ECO:0007669"/>
    <property type="project" value="UniProtKB-KW"/>
</dbReference>
<dbReference type="GO" id="GO:0007165">
    <property type="term" value="P:signal transduction"/>
    <property type="evidence" value="ECO:0007669"/>
    <property type="project" value="UniProtKB-KW"/>
</dbReference>
<dbReference type="CDD" id="cd06225">
    <property type="entry name" value="HAMP"/>
    <property type="match status" value="2"/>
</dbReference>
<dbReference type="CDD" id="cd11386">
    <property type="entry name" value="MCP_signal"/>
    <property type="match status" value="1"/>
</dbReference>
<dbReference type="CDD" id="cd18774">
    <property type="entry name" value="PDC2_HK_sensor"/>
    <property type="match status" value="1"/>
</dbReference>
<dbReference type="Gene3D" id="6.10.250.1910">
    <property type="match status" value="1"/>
</dbReference>
<dbReference type="Gene3D" id="1.10.287.950">
    <property type="entry name" value="Methyl-accepting chemotaxis protein"/>
    <property type="match status" value="1"/>
</dbReference>
<dbReference type="InterPro" id="IPR003660">
    <property type="entry name" value="HAMP_dom"/>
</dbReference>
<dbReference type="InterPro" id="IPR004089">
    <property type="entry name" value="MCPsignal_dom"/>
</dbReference>
<dbReference type="PANTHER" id="PTHR32089:SF112">
    <property type="entry name" value="LYSOZYME-LIKE PROTEIN-RELATED"/>
    <property type="match status" value="1"/>
</dbReference>
<dbReference type="PANTHER" id="PTHR32089">
    <property type="entry name" value="METHYL-ACCEPTING CHEMOTAXIS PROTEIN MCPB"/>
    <property type="match status" value="1"/>
</dbReference>
<dbReference type="Pfam" id="PF00672">
    <property type="entry name" value="HAMP"/>
    <property type="match status" value="2"/>
</dbReference>
<dbReference type="Pfam" id="PF00015">
    <property type="entry name" value="MCPsignal"/>
    <property type="match status" value="1"/>
</dbReference>
<dbReference type="SMART" id="SM00304">
    <property type="entry name" value="HAMP"/>
    <property type="match status" value="2"/>
</dbReference>
<dbReference type="SMART" id="SM00283">
    <property type="entry name" value="MA"/>
    <property type="match status" value="1"/>
</dbReference>
<dbReference type="SUPFAM" id="SSF158472">
    <property type="entry name" value="HAMP domain-like"/>
    <property type="match status" value="1"/>
</dbReference>
<dbReference type="SUPFAM" id="SSF58104">
    <property type="entry name" value="Methyl-accepting chemotaxis protein (MCP) signaling domain"/>
    <property type="match status" value="2"/>
</dbReference>
<dbReference type="PROSITE" id="PS50111">
    <property type="entry name" value="CHEMOTAXIS_TRANSDUC_2"/>
    <property type="match status" value="1"/>
</dbReference>
<dbReference type="PROSITE" id="PS50885">
    <property type="entry name" value="HAMP"/>
    <property type="match status" value="2"/>
</dbReference>
<protein>
    <recommendedName>
        <fullName>Sensory rhodopsin II transducer</fullName>
    </recommendedName>
    <alternativeName>
        <fullName>HTR-II</fullName>
    </alternativeName>
    <alternativeName>
        <fullName>Methyl-accepting phototaxis protein II</fullName>
        <shortName>MPP-II</shortName>
    </alternativeName>
</protein>
<reference key="1">
    <citation type="journal article" date="2008" name="Genomics">
        <title>Evolution in the laboratory: the genome of Halobacterium salinarum strain R1 compared to that of strain NRC-1.</title>
        <authorList>
            <person name="Pfeiffer F."/>
            <person name="Schuster S.C."/>
            <person name="Broicher A."/>
            <person name="Falb M."/>
            <person name="Palm P."/>
            <person name="Rodewald K."/>
            <person name="Ruepp A."/>
            <person name="Soppa J."/>
            <person name="Tittor J."/>
            <person name="Oesterhelt D."/>
        </authorList>
    </citation>
    <scope>NUCLEOTIDE SEQUENCE [LARGE SCALE GENOMIC DNA]</scope>
    <source>
        <strain>ATCC 29341 / DSM 671 / R1</strain>
    </source>
</reference>
<reference key="2">
    <citation type="journal article" date="2008" name="J. Mol. Biol.">
        <title>Physiological sites of deamidation and methyl esterification in sensory transducers of Halobacterium salinarum.</title>
        <authorList>
            <person name="Koch M.K."/>
            <person name="Staudinger W.F."/>
            <person name="Siedler F."/>
            <person name="Oesterhelt D."/>
        </authorList>
    </citation>
    <scope>METHYLATION</scope>
    <source>
        <strain>R1 / S9</strain>
    </source>
</reference>
<feature type="chain" id="PRO_0000429078" description="Sensory rhodopsin II transducer">
    <location>
        <begin position="1"/>
        <end position="764"/>
    </location>
</feature>
<feature type="topological domain" description="Cytoplasmic" evidence="2">
    <location>
        <begin position="1"/>
        <end position="16"/>
    </location>
</feature>
<feature type="transmembrane region" description="Helical" evidence="2">
    <location>
        <begin position="17"/>
        <end position="37"/>
    </location>
</feature>
<feature type="topological domain" description="Extracellular" evidence="2">
    <location>
        <begin position="38"/>
        <end position="278"/>
    </location>
</feature>
<feature type="transmembrane region" description="Helical" evidence="2">
    <location>
        <begin position="279"/>
        <end position="298"/>
    </location>
</feature>
<feature type="topological domain" description="Cytoplasmic" evidence="2">
    <location>
        <begin position="299"/>
        <end position="764"/>
    </location>
</feature>
<feature type="domain" description="HAMP 1" evidence="3">
    <location>
        <begin position="303"/>
        <end position="355"/>
    </location>
</feature>
<feature type="domain" description="HAMP 2" evidence="3">
    <location>
        <begin position="397"/>
        <end position="450"/>
    </location>
</feature>
<feature type="domain" description="Methyl-accepting transducer" evidence="4">
    <location>
        <begin position="469"/>
        <end position="705"/>
    </location>
</feature>
<feature type="region of interest" description="Disordered" evidence="5">
    <location>
        <begin position="347"/>
        <end position="401"/>
    </location>
</feature>
<feature type="compositionally biased region" description="Basic and acidic residues" evidence="5">
    <location>
        <begin position="347"/>
        <end position="394"/>
    </location>
</feature>
<organism>
    <name type="scientific">Halobacterium salinarum (strain ATCC 29341 / DSM 671 / R1)</name>
    <dbReference type="NCBI Taxonomy" id="478009"/>
    <lineage>
        <taxon>Archaea</taxon>
        <taxon>Methanobacteriati</taxon>
        <taxon>Methanobacteriota</taxon>
        <taxon>Stenosarchaea group</taxon>
        <taxon>Halobacteria</taxon>
        <taxon>Halobacteriales</taxon>
        <taxon>Halobacteriaceae</taxon>
        <taxon>Halobacterium</taxon>
        <taxon>Halobacterium salinarum NRC-34001</taxon>
    </lineage>
</organism>
<proteinExistence type="evidence at protein level"/>
<name>HTR2_HALS3</name>
<keyword id="KW-1003">Cell membrane</keyword>
<keyword id="KW-0145">Chemotaxis</keyword>
<keyword id="KW-0157">Chromophore</keyword>
<keyword id="KW-0472">Membrane</keyword>
<keyword id="KW-0488">Methylation</keyword>
<keyword id="KW-0600">Photoreceptor protein</keyword>
<keyword id="KW-0675">Receptor</keyword>
<keyword id="KW-0677">Repeat</keyword>
<keyword id="KW-0716">Sensory transduction</keyword>
<keyword id="KW-0807">Transducer</keyword>
<keyword id="KW-0812">Transmembrane</keyword>
<keyword id="KW-1133">Transmembrane helix</keyword>
<gene>
    <name type="primary">htr2</name>
    <name type="synonym">htrII</name>
    <name type="ordered locus">OE_3481R</name>
</gene>
<comment type="function">
    <text evidence="1">Transduces signals from the phototaxis receptor sensory rhodopsin II (SR-II) to the flagellar motor. Responds to light changes through the variation of the level of methylation. Also acts as a chemotransducer (By similarity).</text>
</comment>
<comment type="subcellular location">
    <subcellularLocation>
        <location evidence="1">Cell membrane</location>
        <topology evidence="1">Multi-pass membrane protein</topology>
    </subcellularLocation>
</comment>
<comment type="PTM">
    <text evidence="6">Methylated by CheR.</text>
</comment>
<comment type="similarity">
    <text evidence="7">Belongs to the methyl-accepting chemotaxis (MCP) protein family.</text>
</comment>
<evidence type="ECO:0000250" key="1"/>
<evidence type="ECO:0000255" key="2"/>
<evidence type="ECO:0000255" key="3">
    <source>
        <dbReference type="PROSITE-ProRule" id="PRU00102"/>
    </source>
</evidence>
<evidence type="ECO:0000255" key="4">
    <source>
        <dbReference type="PROSITE-ProRule" id="PRU00284"/>
    </source>
</evidence>
<evidence type="ECO:0000256" key="5">
    <source>
        <dbReference type="SAM" id="MobiDB-lite"/>
    </source>
</evidence>
<evidence type="ECO:0000269" key="6">
    <source>
    </source>
</evidence>
<evidence type="ECO:0000305" key="7"/>
<accession>B0R6B1</accession>